<name>RLMH_HYDCU</name>
<reference key="1">
    <citation type="journal article" date="2006" name="PLoS Biol.">
        <title>The genome of deep-sea vent chemolithoautotroph Thiomicrospira crunogena XCL-2.</title>
        <authorList>
            <person name="Scott K.M."/>
            <person name="Sievert S.M."/>
            <person name="Abril F.N."/>
            <person name="Ball L.A."/>
            <person name="Barrett C.J."/>
            <person name="Blake R.A."/>
            <person name="Boller A.J."/>
            <person name="Chain P.S.G."/>
            <person name="Clark J.A."/>
            <person name="Davis C.R."/>
            <person name="Detter C."/>
            <person name="Do K.F."/>
            <person name="Dobrinski K.P."/>
            <person name="Faza B.I."/>
            <person name="Fitzpatrick K.A."/>
            <person name="Freyermuth S.K."/>
            <person name="Harmer T.L."/>
            <person name="Hauser L.J."/>
            <person name="Huegler M."/>
            <person name="Kerfeld C.A."/>
            <person name="Klotz M.G."/>
            <person name="Kong W.W."/>
            <person name="Land M."/>
            <person name="Lapidus A."/>
            <person name="Larimer F.W."/>
            <person name="Longo D.L."/>
            <person name="Lucas S."/>
            <person name="Malfatti S.A."/>
            <person name="Massey S.E."/>
            <person name="Martin D.D."/>
            <person name="McCuddin Z."/>
            <person name="Meyer F."/>
            <person name="Moore J.L."/>
            <person name="Ocampo L.H. Jr."/>
            <person name="Paul J.H."/>
            <person name="Paulsen I.T."/>
            <person name="Reep D.K."/>
            <person name="Ren Q."/>
            <person name="Ross R.L."/>
            <person name="Sato P.Y."/>
            <person name="Thomas P."/>
            <person name="Tinkham L.E."/>
            <person name="Zeruth G.T."/>
        </authorList>
    </citation>
    <scope>NUCLEOTIDE SEQUENCE [LARGE SCALE GENOMIC DNA]</scope>
    <source>
        <strain>DSM 25203 / XCL-2</strain>
    </source>
</reference>
<sequence>MNIHFIVVGQKMPGWVQTGYAEYAKRLPKACTLKLVELPMATRGKSGSVAQYKAEEAKRILSAVPKGAKLIVLDEKGQELTTVQFSQKLDDWLGSGQDVALIVGGPDGLDSSLIQQAEWKWGLSKLTLPHPLVRVMVAEQIYRAWSVLQNHPYHRE</sequence>
<accession>Q31IE1</accession>
<gene>
    <name evidence="1" type="primary">rlmH</name>
    <name type="ordered locus">Tcr_0486</name>
</gene>
<proteinExistence type="inferred from homology"/>
<protein>
    <recommendedName>
        <fullName evidence="1">Ribosomal RNA large subunit methyltransferase H</fullName>
        <ecNumber evidence="1">2.1.1.177</ecNumber>
    </recommendedName>
    <alternativeName>
        <fullName evidence="1">23S rRNA (pseudouridine1915-N3)-methyltransferase</fullName>
    </alternativeName>
    <alternativeName>
        <fullName evidence="1">23S rRNA m3Psi1915 methyltransferase</fullName>
    </alternativeName>
    <alternativeName>
        <fullName evidence="1">rRNA (pseudouridine-N3-)-methyltransferase RlmH</fullName>
    </alternativeName>
</protein>
<evidence type="ECO:0000255" key="1">
    <source>
        <dbReference type="HAMAP-Rule" id="MF_00658"/>
    </source>
</evidence>
<evidence type="ECO:0000305" key="2"/>
<dbReference type="EC" id="2.1.1.177" evidence="1"/>
<dbReference type="EMBL" id="CP000109">
    <property type="protein sequence ID" value="ABB41082.1"/>
    <property type="status" value="ALT_INIT"/>
    <property type="molecule type" value="Genomic_DNA"/>
</dbReference>
<dbReference type="SMR" id="Q31IE1"/>
<dbReference type="STRING" id="317025.Tcr_0486"/>
<dbReference type="KEGG" id="tcx:Tcr_0486"/>
<dbReference type="eggNOG" id="COG1576">
    <property type="taxonomic scope" value="Bacteria"/>
</dbReference>
<dbReference type="HOGENOM" id="CLU_100552_1_0_6"/>
<dbReference type="OrthoDB" id="9806643at2"/>
<dbReference type="GO" id="GO:0005737">
    <property type="term" value="C:cytoplasm"/>
    <property type="evidence" value="ECO:0007669"/>
    <property type="project" value="UniProtKB-SubCell"/>
</dbReference>
<dbReference type="GO" id="GO:0070038">
    <property type="term" value="F:rRNA (pseudouridine-N3-)-methyltransferase activity"/>
    <property type="evidence" value="ECO:0007669"/>
    <property type="project" value="UniProtKB-UniRule"/>
</dbReference>
<dbReference type="CDD" id="cd18081">
    <property type="entry name" value="RlmH-like"/>
    <property type="match status" value="1"/>
</dbReference>
<dbReference type="Gene3D" id="3.40.1280.10">
    <property type="match status" value="1"/>
</dbReference>
<dbReference type="HAMAP" id="MF_00658">
    <property type="entry name" value="23SrRNA_methyltr_H"/>
    <property type="match status" value="1"/>
</dbReference>
<dbReference type="InterPro" id="IPR029028">
    <property type="entry name" value="Alpha/beta_knot_MTases"/>
</dbReference>
<dbReference type="InterPro" id="IPR003742">
    <property type="entry name" value="RlmH-like"/>
</dbReference>
<dbReference type="InterPro" id="IPR029026">
    <property type="entry name" value="tRNA_m1G_MTases_N"/>
</dbReference>
<dbReference type="NCBIfam" id="NF000986">
    <property type="entry name" value="PRK00103.1-4"/>
    <property type="match status" value="1"/>
</dbReference>
<dbReference type="NCBIfam" id="TIGR00246">
    <property type="entry name" value="tRNA_RlmH_YbeA"/>
    <property type="match status" value="1"/>
</dbReference>
<dbReference type="PANTHER" id="PTHR33603">
    <property type="entry name" value="METHYLTRANSFERASE"/>
    <property type="match status" value="1"/>
</dbReference>
<dbReference type="PANTHER" id="PTHR33603:SF1">
    <property type="entry name" value="RIBOSOMAL RNA LARGE SUBUNIT METHYLTRANSFERASE H"/>
    <property type="match status" value="1"/>
</dbReference>
<dbReference type="Pfam" id="PF02590">
    <property type="entry name" value="SPOUT_MTase"/>
    <property type="match status" value="1"/>
</dbReference>
<dbReference type="PIRSF" id="PIRSF004505">
    <property type="entry name" value="MT_bac"/>
    <property type="match status" value="1"/>
</dbReference>
<dbReference type="SUPFAM" id="SSF75217">
    <property type="entry name" value="alpha/beta knot"/>
    <property type="match status" value="1"/>
</dbReference>
<keyword id="KW-0963">Cytoplasm</keyword>
<keyword id="KW-0489">Methyltransferase</keyword>
<keyword id="KW-0698">rRNA processing</keyword>
<keyword id="KW-0949">S-adenosyl-L-methionine</keyword>
<keyword id="KW-0808">Transferase</keyword>
<feature type="chain" id="PRO_0000260627" description="Ribosomal RNA large subunit methyltransferase H">
    <location>
        <begin position="1"/>
        <end position="156"/>
    </location>
</feature>
<feature type="binding site" evidence="1">
    <location>
        <position position="73"/>
    </location>
    <ligand>
        <name>S-adenosyl-L-methionine</name>
        <dbReference type="ChEBI" id="CHEBI:59789"/>
    </ligand>
</feature>
<feature type="binding site" evidence="1">
    <location>
        <position position="104"/>
    </location>
    <ligand>
        <name>S-adenosyl-L-methionine</name>
        <dbReference type="ChEBI" id="CHEBI:59789"/>
    </ligand>
</feature>
<feature type="binding site" evidence="1">
    <location>
        <begin position="123"/>
        <end position="128"/>
    </location>
    <ligand>
        <name>S-adenosyl-L-methionine</name>
        <dbReference type="ChEBI" id="CHEBI:59789"/>
    </ligand>
</feature>
<organism>
    <name type="scientific">Hydrogenovibrio crunogenus (strain DSM 25203 / XCL-2)</name>
    <name type="common">Thiomicrospira crunogena</name>
    <dbReference type="NCBI Taxonomy" id="317025"/>
    <lineage>
        <taxon>Bacteria</taxon>
        <taxon>Pseudomonadati</taxon>
        <taxon>Pseudomonadota</taxon>
        <taxon>Gammaproteobacteria</taxon>
        <taxon>Thiotrichales</taxon>
        <taxon>Piscirickettsiaceae</taxon>
        <taxon>Hydrogenovibrio</taxon>
    </lineage>
</organism>
<comment type="function">
    <text evidence="1">Specifically methylates the pseudouridine at position 1915 (m3Psi1915) in 23S rRNA.</text>
</comment>
<comment type="catalytic activity">
    <reaction evidence="1">
        <text>pseudouridine(1915) in 23S rRNA + S-adenosyl-L-methionine = N(3)-methylpseudouridine(1915) in 23S rRNA + S-adenosyl-L-homocysteine + H(+)</text>
        <dbReference type="Rhea" id="RHEA:42752"/>
        <dbReference type="Rhea" id="RHEA-COMP:10221"/>
        <dbReference type="Rhea" id="RHEA-COMP:10222"/>
        <dbReference type="ChEBI" id="CHEBI:15378"/>
        <dbReference type="ChEBI" id="CHEBI:57856"/>
        <dbReference type="ChEBI" id="CHEBI:59789"/>
        <dbReference type="ChEBI" id="CHEBI:65314"/>
        <dbReference type="ChEBI" id="CHEBI:74486"/>
        <dbReference type="EC" id="2.1.1.177"/>
    </reaction>
</comment>
<comment type="subunit">
    <text evidence="1">Homodimer.</text>
</comment>
<comment type="subcellular location">
    <subcellularLocation>
        <location evidence="1">Cytoplasm</location>
    </subcellularLocation>
</comment>
<comment type="similarity">
    <text evidence="1">Belongs to the RNA methyltransferase RlmH family.</text>
</comment>
<comment type="sequence caution" evidence="2">
    <conflict type="erroneous initiation">
        <sequence resource="EMBL-CDS" id="ABB41082"/>
    </conflict>
</comment>